<feature type="chain" id="PRO_0000324285" description="Endosome-associated-trafficking regulator 1">
    <location>
        <begin position="1"/>
        <end position="435"/>
    </location>
</feature>
<feature type="region of interest" description="Disordered" evidence="3">
    <location>
        <begin position="136"/>
        <end position="185"/>
    </location>
</feature>
<feature type="region of interest" description="Required for interaction with PTPN13" evidence="6">
    <location>
        <begin position="173"/>
        <end position="198"/>
    </location>
</feature>
<feature type="region of interest" description="Disordered" evidence="3">
    <location>
        <begin position="225"/>
        <end position="251"/>
    </location>
</feature>
<feature type="coiled-coil region" evidence="2">
    <location>
        <begin position="261"/>
        <end position="371"/>
    </location>
</feature>
<feature type="compositionally biased region" description="Acidic residues" evidence="3">
    <location>
        <begin position="173"/>
        <end position="182"/>
    </location>
</feature>
<feature type="compositionally biased region" description="Low complexity" evidence="3">
    <location>
        <begin position="240"/>
        <end position="250"/>
    </location>
</feature>
<feature type="modified residue" description="Phosphoserine" evidence="20">
    <location>
        <position position="18"/>
    </location>
</feature>
<feature type="modified residue" description="Phosphoserine" evidence="21">
    <location>
        <position position="147"/>
    </location>
</feature>
<feature type="modified residue" description="Phosphoserine" evidence="19 20 21">
    <location>
        <position position="243"/>
    </location>
</feature>
<feature type="modified residue" description="Phosphoserine" evidence="18">
    <location>
        <position position="247"/>
    </location>
</feature>
<feature type="splice variant" id="VSP_032176" description="In isoform 3." evidence="14">
    <location>
        <begin position="1"/>
        <end position="58"/>
    </location>
</feature>
<feature type="splice variant" id="VSP_040477" description="In isoform 4." evidence="15">
    <location>
        <begin position="24"/>
        <end position="96"/>
    </location>
</feature>
<feature type="splice variant" id="VSP_032177" description="In isoform 2." evidence="11">
    <location>
        <begin position="75"/>
        <end position="97"/>
    </location>
</feature>
<feature type="sequence variant" id="VAR_039687" description="In dbSNP:rs7047681.">
    <original>L</original>
    <variation>V</variation>
    <location>
        <position position="157"/>
    </location>
</feature>
<feature type="sequence variant" id="VAR_039688" description="In dbSNP:rs17851182." evidence="4">
    <original>E</original>
    <variation>G</variation>
    <location>
        <position position="176"/>
    </location>
</feature>
<feature type="sequence variant" id="VAR_039689" description="In dbSNP:rs3812577." evidence="10">
    <original>R</original>
    <variation>Q</variation>
    <location>
        <position position="304"/>
    </location>
</feature>
<feature type="sequence variant" id="VAR_039690" description="In dbSNP:rs1131992." evidence="10">
    <original>V</original>
    <variation>M</variation>
    <location>
        <position position="379"/>
    </location>
</feature>
<feature type="sequence variant" id="VAR_039691" description="In dbSNP:rs17855450." evidence="5">
    <original>V</original>
    <variation>I</variation>
    <location>
        <position position="428"/>
    </location>
</feature>
<feature type="mutagenesis site" description="Disrupts interaction with PTPN13." evidence="6">
    <original>P</original>
    <variation>A</variation>
    <location>
        <position position="190"/>
    </location>
</feature>
<feature type="mutagenesis site" description="Disrupts interaction with PTPN13." evidence="6">
    <original>E</original>
    <variation>A</variation>
    <location>
        <position position="194"/>
    </location>
</feature>
<feature type="sequence conflict" description="In Ref. 4; AAH14515." evidence="16" ref="4">
    <original>R</original>
    <variation>H</variation>
    <location>
        <position position="7"/>
    </location>
</feature>
<feature type="sequence conflict" description="In Ref. 1; AAQ56721." evidence="16" ref="1">
    <original>N</original>
    <variation>T</variation>
    <location>
        <position position="343"/>
    </location>
</feature>
<proteinExistence type="evidence at protein level"/>
<sequence length="435" mass="47961">MSGYQRRPGATPLSRARSLAIPDAPAFYERRSCLPQLNCERPHGRDLDSPFFGIRPAFMCYVPSPVLASVGDTDFGYGKGKCSKQSPSGAHGTHFGDDRFEDLEEANPFSFREFLKTKNLGLSKEDPASRIYAKEASRHSLGLDHNSPPSQTGGYGLEYQQPFFEDPTGAGDLLDEEEDEDTGWSGAYLPSAIEQTHPERVPAGTSPCSTYLSFFSTPSELAGPESLPSWALSDTDSRVSPASPAGSPSADFAVHGESLGDRHLRTLQISYDALKDENSKLRRKLNEVQSFSEAQTEMVRTLERKLEAKMIKEESDYHDLESVVQQVEQNLELMTKRAVKAENHVVKLKQEISLLQAQVSNFQRENEALRCGQGASLTVVKQNADVALQNLRVVMNSAQASIKQLVSGAETLNLVAEILKSIDRISEVKDEEEDS</sequence>
<reference key="1">
    <citation type="submission" date="2003-07" db="EMBL/GenBank/DDBJ databases">
        <authorList>
            <person name="Lin L."/>
            <person name="Yu R."/>
            <person name="Cao L."/>
            <person name="Ke R."/>
            <person name="Li H."/>
            <person name="Zhou G."/>
            <person name="Shen C."/>
            <person name="Zhong G."/>
            <person name="Xiao W."/>
            <person name="Li M."/>
            <person name="Yang S."/>
        </authorList>
    </citation>
    <scope>NUCLEOTIDE SEQUENCE [LARGE SCALE MRNA] (ISOFORM 3)</scope>
    <scope>VARIANTS GLN-304 AND MET-379</scope>
</reference>
<reference key="2">
    <citation type="submission" date="2004-07" db="EMBL/GenBank/DDBJ databases">
        <title>Full-length cDNA libraries and normalization.</title>
        <authorList>
            <person name="Li W.B."/>
            <person name="Gruber C."/>
            <person name="Jessee J."/>
            <person name="Polayes D."/>
        </authorList>
    </citation>
    <scope>NUCLEOTIDE SEQUENCE [LARGE SCALE MRNA] (ISOFORM 4)</scope>
</reference>
<reference key="3">
    <citation type="journal article" date="2004" name="Nature">
        <title>DNA sequence and analysis of human chromosome 9.</title>
        <authorList>
            <person name="Humphray S.J."/>
            <person name="Oliver K."/>
            <person name="Hunt A.R."/>
            <person name="Plumb R.W."/>
            <person name="Loveland J.E."/>
            <person name="Howe K.L."/>
            <person name="Andrews T.D."/>
            <person name="Searle S."/>
            <person name="Hunt S.E."/>
            <person name="Scott C.E."/>
            <person name="Jones M.C."/>
            <person name="Ainscough R."/>
            <person name="Almeida J.P."/>
            <person name="Ambrose K.D."/>
            <person name="Ashwell R.I.S."/>
            <person name="Babbage A.K."/>
            <person name="Babbage S."/>
            <person name="Bagguley C.L."/>
            <person name="Bailey J."/>
            <person name="Banerjee R."/>
            <person name="Barker D.J."/>
            <person name="Barlow K.F."/>
            <person name="Bates K."/>
            <person name="Beasley H."/>
            <person name="Beasley O."/>
            <person name="Bird C.P."/>
            <person name="Bray-Allen S."/>
            <person name="Brown A.J."/>
            <person name="Brown J.Y."/>
            <person name="Burford D."/>
            <person name="Burrill W."/>
            <person name="Burton J."/>
            <person name="Carder C."/>
            <person name="Carter N.P."/>
            <person name="Chapman J.C."/>
            <person name="Chen Y."/>
            <person name="Clarke G."/>
            <person name="Clark S.Y."/>
            <person name="Clee C.M."/>
            <person name="Clegg S."/>
            <person name="Collier R.E."/>
            <person name="Corby N."/>
            <person name="Crosier M."/>
            <person name="Cummings A.T."/>
            <person name="Davies J."/>
            <person name="Dhami P."/>
            <person name="Dunn M."/>
            <person name="Dutta I."/>
            <person name="Dyer L.W."/>
            <person name="Earthrowl M.E."/>
            <person name="Faulkner L."/>
            <person name="Fleming C.J."/>
            <person name="Frankish A."/>
            <person name="Frankland J.A."/>
            <person name="French L."/>
            <person name="Fricker D.G."/>
            <person name="Garner P."/>
            <person name="Garnett J."/>
            <person name="Ghori J."/>
            <person name="Gilbert J.G.R."/>
            <person name="Glison C."/>
            <person name="Grafham D.V."/>
            <person name="Gribble S."/>
            <person name="Griffiths C."/>
            <person name="Griffiths-Jones S."/>
            <person name="Grocock R."/>
            <person name="Guy J."/>
            <person name="Hall R.E."/>
            <person name="Hammond S."/>
            <person name="Harley J.L."/>
            <person name="Harrison E.S.I."/>
            <person name="Hart E.A."/>
            <person name="Heath P.D."/>
            <person name="Henderson C.D."/>
            <person name="Hopkins B.L."/>
            <person name="Howard P.J."/>
            <person name="Howden P.J."/>
            <person name="Huckle E."/>
            <person name="Johnson C."/>
            <person name="Johnson D."/>
            <person name="Joy A.A."/>
            <person name="Kay M."/>
            <person name="Keenan S."/>
            <person name="Kershaw J.K."/>
            <person name="Kimberley A.M."/>
            <person name="King A."/>
            <person name="Knights A."/>
            <person name="Laird G.K."/>
            <person name="Langford C."/>
            <person name="Lawlor S."/>
            <person name="Leongamornlert D.A."/>
            <person name="Leversha M."/>
            <person name="Lloyd C."/>
            <person name="Lloyd D.M."/>
            <person name="Lovell J."/>
            <person name="Martin S."/>
            <person name="Mashreghi-Mohammadi M."/>
            <person name="Matthews L."/>
            <person name="McLaren S."/>
            <person name="McLay K.E."/>
            <person name="McMurray A."/>
            <person name="Milne S."/>
            <person name="Nickerson T."/>
            <person name="Nisbett J."/>
            <person name="Nordsiek G."/>
            <person name="Pearce A.V."/>
            <person name="Peck A.I."/>
            <person name="Porter K.M."/>
            <person name="Pandian R."/>
            <person name="Pelan S."/>
            <person name="Phillimore B."/>
            <person name="Povey S."/>
            <person name="Ramsey Y."/>
            <person name="Rand V."/>
            <person name="Scharfe M."/>
            <person name="Sehra H.K."/>
            <person name="Shownkeen R."/>
            <person name="Sims S.K."/>
            <person name="Skuce C.D."/>
            <person name="Smith M."/>
            <person name="Steward C.A."/>
            <person name="Swarbreck D."/>
            <person name="Sycamore N."/>
            <person name="Tester J."/>
            <person name="Thorpe A."/>
            <person name="Tracey A."/>
            <person name="Tromans A."/>
            <person name="Thomas D.W."/>
            <person name="Wall M."/>
            <person name="Wallis J.M."/>
            <person name="West A.P."/>
            <person name="Whitehead S.L."/>
            <person name="Willey D.L."/>
            <person name="Williams S.A."/>
            <person name="Wilming L."/>
            <person name="Wray P.W."/>
            <person name="Young L."/>
            <person name="Ashurst J.L."/>
            <person name="Coulson A."/>
            <person name="Blocker H."/>
            <person name="Durbin R.M."/>
            <person name="Sulston J.E."/>
            <person name="Hubbard T."/>
            <person name="Jackson M.J."/>
            <person name="Bentley D.R."/>
            <person name="Beck S."/>
            <person name="Rogers J."/>
            <person name="Dunham I."/>
        </authorList>
    </citation>
    <scope>NUCLEOTIDE SEQUENCE [LARGE SCALE GENOMIC DNA]</scope>
</reference>
<reference key="4">
    <citation type="submission" date="2005-07" db="EMBL/GenBank/DDBJ databases">
        <authorList>
            <person name="Mural R.J."/>
            <person name="Istrail S."/>
            <person name="Sutton G.G."/>
            <person name="Florea L."/>
            <person name="Halpern A.L."/>
            <person name="Mobarry C.M."/>
            <person name="Lippert R."/>
            <person name="Walenz B."/>
            <person name="Shatkay H."/>
            <person name="Dew I."/>
            <person name="Miller J.R."/>
            <person name="Flanigan M.J."/>
            <person name="Edwards N.J."/>
            <person name="Bolanos R."/>
            <person name="Fasulo D."/>
            <person name="Halldorsson B.V."/>
            <person name="Hannenhalli S."/>
            <person name="Turner R."/>
            <person name="Yooseph S."/>
            <person name="Lu F."/>
            <person name="Nusskern D.R."/>
            <person name="Shue B.C."/>
            <person name="Zheng X.H."/>
            <person name="Zhong F."/>
            <person name="Delcher A.L."/>
            <person name="Huson D.H."/>
            <person name="Kravitz S.A."/>
            <person name="Mouchard L."/>
            <person name="Reinert K."/>
            <person name="Remington K.A."/>
            <person name="Clark A.G."/>
            <person name="Waterman M.S."/>
            <person name="Eichler E.E."/>
            <person name="Adams M.D."/>
            <person name="Hunkapiller M.W."/>
            <person name="Myers E.W."/>
            <person name="Venter J.C."/>
        </authorList>
    </citation>
    <scope>NUCLEOTIDE SEQUENCE [LARGE SCALE GENOMIC DNA]</scope>
</reference>
<reference key="5">
    <citation type="journal article" date="2004" name="Genome Res.">
        <title>The status, quality, and expansion of the NIH full-length cDNA project: the Mammalian Gene Collection (MGC).</title>
        <authorList>
            <consortium name="The MGC Project Team"/>
        </authorList>
    </citation>
    <scope>NUCLEOTIDE SEQUENCE [LARGE SCALE MRNA] (ISOFORM 2)</scope>
    <scope>VARIANT ILE-428</scope>
    <source>
        <tissue>Skin</tissue>
    </source>
</reference>
<reference key="6">
    <citation type="journal article" date="2004" name="Nat. Genet.">
        <title>Complete sequencing and characterization of 21,243 full-length human cDNAs.</title>
        <authorList>
            <person name="Ota T."/>
            <person name="Suzuki Y."/>
            <person name="Nishikawa T."/>
            <person name="Otsuki T."/>
            <person name="Sugiyama T."/>
            <person name="Irie R."/>
            <person name="Wakamatsu A."/>
            <person name="Hayashi K."/>
            <person name="Sato H."/>
            <person name="Nagai K."/>
            <person name="Kimura K."/>
            <person name="Makita H."/>
            <person name="Sekine M."/>
            <person name="Obayashi M."/>
            <person name="Nishi T."/>
            <person name="Shibahara T."/>
            <person name="Tanaka T."/>
            <person name="Ishii S."/>
            <person name="Yamamoto J."/>
            <person name="Saito K."/>
            <person name="Kawai Y."/>
            <person name="Isono Y."/>
            <person name="Nakamura Y."/>
            <person name="Nagahari K."/>
            <person name="Murakami K."/>
            <person name="Yasuda T."/>
            <person name="Iwayanagi T."/>
            <person name="Wagatsuma M."/>
            <person name="Shiratori A."/>
            <person name="Sudo H."/>
            <person name="Hosoiri T."/>
            <person name="Kaku Y."/>
            <person name="Kodaira H."/>
            <person name="Kondo H."/>
            <person name="Sugawara M."/>
            <person name="Takahashi M."/>
            <person name="Kanda K."/>
            <person name="Yokoi T."/>
            <person name="Furuya T."/>
            <person name="Kikkawa E."/>
            <person name="Omura Y."/>
            <person name="Abe K."/>
            <person name="Kamihara K."/>
            <person name="Katsuta N."/>
            <person name="Sato K."/>
            <person name="Tanikawa M."/>
            <person name="Yamazaki M."/>
            <person name="Ninomiya K."/>
            <person name="Ishibashi T."/>
            <person name="Yamashita H."/>
            <person name="Murakawa K."/>
            <person name="Fujimori K."/>
            <person name="Tanai H."/>
            <person name="Kimata M."/>
            <person name="Watanabe M."/>
            <person name="Hiraoka S."/>
            <person name="Chiba Y."/>
            <person name="Ishida S."/>
            <person name="Ono Y."/>
            <person name="Takiguchi S."/>
            <person name="Watanabe S."/>
            <person name="Yosida M."/>
            <person name="Hotuta T."/>
            <person name="Kusano J."/>
            <person name="Kanehori K."/>
            <person name="Takahashi-Fujii A."/>
            <person name="Hara H."/>
            <person name="Tanase T.-O."/>
            <person name="Nomura Y."/>
            <person name="Togiya S."/>
            <person name="Komai F."/>
            <person name="Hara R."/>
            <person name="Takeuchi K."/>
            <person name="Arita M."/>
            <person name="Imose N."/>
            <person name="Musashino K."/>
            <person name="Yuuki H."/>
            <person name="Oshima A."/>
            <person name="Sasaki N."/>
            <person name="Aotsuka S."/>
            <person name="Yoshikawa Y."/>
            <person name="Matsunawa H."/>
            <person name="Ichihara T."/>
            <person name="Shiohata N."/>
            <person name="Sano S."/>
            <person name="Moriya S."/>
            <person name="Momiyama H."/>
            <person name="Satoh N."/>
            <person name="Takami S."/>
            <person name="Terashima Y."/>
            <person name="Suzuki O."/>
            <person name="Nakagawa S."/>
            <person name="Senoh A."/>
            <person name="Mizoguchi H."/>
            <person name="Goto Y."/>
            <person name="Shimizu F."/>
            <person name="Wakebe H."/>
            <person name="Hishigaki H."/>
            <person name="Watanabe T."/>
            <person name="Sugiyama A."/>
            <person name="Takemoto M."/>
            <person name="Kawakami B."/>
            <person name="Yamazaki M."/>
            <person name="Watanabe K."/>
            <person name="Kumagai A."/>
            <person name="Itakura S."/>
            <person name="Fukuzumi Y."/>
            <person name="Fujimori Y."/>
            <person name="Komiyama M."/>
            <person name="Tashiro H."/>
            <person name="Tanigami A."/>
            <person name="Fujiwara T."/>
            <person name="Ono T."/>
            <person name="Yamada K."/>
            <person name="Fujii Y."/>
            <person name="Ozaki K."/>
            <person name="Hirao M."/>
            <person name="Ohmori Y."/>
            <person name="Kawabata A."/>
            <person name="Hikiji T."/>
            <person name="Kobatake N."/>
            <person name="Inagaki H."/>
            <person name="Ikema Y."/>
            <person name="Okamoto S."/>
            <person name="Okitani R."/>
            <person name="Kawakami T."/>
            <person name="Noguchi S."/>
            <person name="Itoh T."/>
            <person name="Shigeta K."/>
            <person name="Senba T."/>
            <person name="Matsumura K."/>
            <person name="Nakajima Y."/>
            <person name="Mizuno T."/>
            <person name="Morinaga M."/>
            <person name="Sasaki M."/>
            <person name="Togashi T."/>
            <person name="Oyama M."/>
            <person name="Hata H."/>
            <person name="Watanabe M."/>
            <person name="Komatsu T."/>
            <person name="Mizushima-Sugano J."/>
            <person name="Satoh T."/>
            <person name="Shirai Y."/>
            <person name="Takahashi Y."/>
            <person name="Nakagawa K."/>
            <person name="Okumura K."/>
            <person name="Nagase T."/>
            <person name="Nomura N."/>
            <person name="Kikuchi H."/>
            <person name="Masuho Y."/>
            <person name="Yamashita R."/>
            <person name="Nakai K."/>
            <person name="Yada T."/>
            <person name="Nakamura Y."/>
            <person name="Ohara O."/>
            <person name="Isogai T."/>
            <person name="Sugano S."/>
        </authorList>
    </citation>
    <scope>NUCLEOTIDE SEQUENCE [LARGE SCALE MRNA] OF 80-435 (ISOFORMS 1/3)</scope>
    <scope>VARIANT GLY-176</scope>
</reference>
<reference key="7">
    <citation type="journal article" date="1998" name="Int. J. Cancer">
        <title>Characterization of human colon cancer antigens recognized by autologous antibodies.</title>
        <authorList>
            <person name="Scanlan M.J."/>
            <person name="Chen Y.-T."/>
            <person name="Williamson B."/>
            <person name="Gure A.O."/>
            <person name="Stockert E."/>
            <person name="Gordan J.D."/>
            <person name="Tuereci O."/>
            <person name="Sahin U."/>
            <person name="Pfreundschuh M."/>
            <person name="Old L.J."/>
        </authorList>
    </citation>
    <scope>NUCLEOTIDE SEQUENCE [MRNA] OF 221-412</scope>
    <source>
        <tissue>Colon carcinoma</tissue>
    </source>
</reference>
<reference key="8">
    <citation type="journal article" date="2006" name="Cell">
        <title>Global, in vivo, and site-specific phosphorylation dynamics in signaling networks.</title>
        <authorList>
            <person name="Olsen J.V."/>
            <person name="Blagoev B."/>
            <person name="Gnad F."/>
            <person name="Macek B."/>
            <person name="Kumar C."/>
            <person name="Mortensen P."/>
            <person name="Mann M."/>
        </authorList>
    </citation>
    <scope>IDENTIFICATION BY MASS SPECTROMETRY [LARGE SCALE ANALYSIS]</scope>
    <source>
        <tissue>Cervix carcinoma</tissue>
    </source>
</reference>
<reference key="9">
    <citation type="journal article" date="2008" name="Proc. Natl. Acad. Sci. U.S.A.">
        <title>A quantitative atlas of mitotic phosphorylation.</title>
        <authorList>
            <person name="Dephoure N."/>
            <person name="Zhou C."/>
            <person name="Villen J."/>
            <person name="Beausoleil S.A."/>
            <person name="Bakalarski C.E."/>
            <person name="Elledge S.J."/>
            <person name="Gygi S.P."/>
        </authorList>
    </citation>
    <scope>PHOSPHORYLATION [LARGE SCALE ANALYSIS] AT SER-247</scope>
    <scope>IDENTIFICATION BY MASS SPECTROMETRY [LARGE SCALE ANALYSIS]</scope>
    <source>
        <tissue>Cervix carcinoma</tissue>
    </source>
</reference>
<reference key="10">
    <citation type="journal article" date="2010" name="Sci. Signal.">
        <title>Quantitative phosphoproteomics reveals widespread full phosphorylation site occupancy during mitosis.</title>
        <authorList>
            <person name="Olsen J.V."/>
            <person name="Vermeulen M."/>
            <person name="Santamaria A."/>
            <person name="Kumar C."/>
            <person name="Miller M.L."/>
            <person name="Jensen L.J."/>
            <person name="Gnad F."/>
            <person name="Cox J."/>
            <person name="Jensen T.S."/>
            <person name="Nigg E.A."/>
            <person name="Brunak S."/>
            <person name="Mann M."/>
        </authorList>
    </citation>
    <scope>PHOSPHORYLATION [LARGE SCALE ANALYSIS] AT SER-243</scope>
    <scope>IDENTIFICATION BY MASS SPECTROMETRY [LARGE SCALE ANALYSIS]</scope>
    <source>
        <tissue>Cervix carcinoma</tissue>
    </source>
</reference>
<reference key="11">
    <citation type="journal article" date="2013" name="J. Proteome Res.">
        <title>Toward a comprehensive characterization of a human cancer cell phosphoproteome.</title>
        <authorList>
            <person name="Zhou H."/>
            <person name="Di Palma S."/>
            <person name="Preisinger C."/>
            <person name="Peng M."/>
            <person name="Polat A.N."/>
            <person name="Heck A.J."/>
            <person name="Mohammed S."/>
        </authorList>
    </citation>
    <scope>PHOSPHORYLATION [LARGE SCALE ANALYSIS] AT SER-18 AND SER-243</scope>
    <scope>IDENTIFICATION BY MASS SPECTROMETRY [LARGE SCALE ANALYSIS]</scope>
    <source>
        <tissue>Cervix carcinoma</tissue>
        <tissue>Erythroleukemia</tissue>
    </source>
</reference>
<reference key="12">
    <citation type="journal article" date="2013" name="Oncogene">
        <title>The serologically defined colon cancer antigen-3 interacts with the protein tyrosine phosphatase PTPN13 and is involved in the regulation of cytokinesis.</title>
        <authorList>
            <person name="Hagemann N."/>
            <person name="Ackermann N."/>
            <person name="Christmann J."/>
            <person name="Brier S."/>
            <person name="Yu F."/>
            <person name="Erdmann K.S."/>
        </authorList>
    </citation>
    <scope>FUNCTION</scope>
    <scope>SUBCELLULAR LOCATION</scope>
    <scope>INTERACTION WITH PTPN13 AND GIT1</scope>
    <scope>IDENTIFICATION IN A COMPLEX WITH PTPN13 AND GIT1</scope>
    <scope>PHOSPHORYLATION</scope>
    <scope>TISSUE SPECIFICITY</scope>
    <scope>MUTAGENESIS OF PRO-190 AND GLU-194</scope>
</reference>
<reference key="13">
    <citation type="journal article" date="2014" name="J. Cell Sci.">
        <title>Identification of molecular heterogeneity in SNX27-retromer-mediated endosome-to-plasma-membrane recycling.</title>
        <authorList>
            <person name="McGough I.J."/>
            <person name="Steinberg F."/>
            <person name="Gallon M."/>
            <person name="Yatsu A."/>
            <person name="Ohbayashi N."/>
            <person name="Heesom K.J."/>
            <person name="Fukuda M."/>
            <person name="Cullen P.J."/>
        </authorList>
    </citation>
    <scope>FUNCTION</scope>
    <scope>INTERACTION WITH VPS35</scope>
    <scope>SUBCELLULAR LOCATION</scope>
    <scope>IDENTIFICATION BY MASS SPECTROMETRY</scope>
</reference>
<reference key="14">
    <citation type="journal article" date="2014" name="J. Proteomics">
        <title>An enzyme assisted RP-RPLC approach for in-depth analysis of human liver phosphoproteome.</title>
        <authorList>
            <person name="Bian Y."/>
            <person name="Song C."/>
            <person name="Cheng K."/>
            <person name="Dong M."/>
            <person name="Wang F."/>
            <person name="Huang J."/>
            <person name="Sun D."/>
            <person name="Wang L."/>
            <person name="Ye M."/>
            <person name="Zou H."/>
        </authorList>
    </citation>
    <scope>PHOSPHORYLATION [LARGE SCALE ANALYSIS] AT SER-147 AND SER-243</scope>
    <scope>IDENTIFICATION BY MASS SPECTROMETRY [LARGE SCALE ANALYSIS]</scope>
    <source>
        <tissue>Liver</tissue>
    </source>
</reference>
<reference key="15">
    <citation type="journal article" date="2016" name="PLoS ONE">
        <title>Characterization and Genetic Analyses of New Genes Coding for NOD2 Interacting Proteins.</title>
        <authorList>
            <person name="Thiebaut R."/>
            <person name="Esmiol S."/>
            <person name="Lecine P."/>
            <person name="Mahfouz B."/>
            <person name="Hermant A."/>
            <person name="Nicoletti C."/>
            <person name="Parnis S."/>
            <person name="Perroy J."/>
            <person name="Borg J.P."/>
            <person name="Pascoe L."/>
            <person name="Hugot J.P."/>
            <person name="Ollendorff V."/>
        </authorList>
    </citation>
    <scope>INTERACTION WITH NOD2</scope>
</reference>
<reference key="16">
    <citation type="journal article" date="2016" name="Sci. Rep.">
        <title>The serologically defined colon cancer antigen-3 (SDCCAG3) is involved in the regulation of ciliogenesis.</title>
        <authorList>
            <person name="Yu F."/>
            <person name="Sharma S."/>
            <person name="Skowronek A."/>
            <person name="Erdmann K.S."/>
        </authorList>
    </citation>
    <scope>FUNCTION</scope>
    <scope>SUBCELLULAR LOCATION</scope>
    <scope>INTERACTION WITH IFT88</scope>
    <scope>DOMAIN</scope>
</reference>
<name>ENTR1_HUMAN</name>
<accession>Q96C92</accession>
<accession>A6NCP1</accession>
<accession>O60525</accession>
<accession>Q5SXN1</accession>
<accession>Q5SXN2</accession>
<accession>Q5SXN3</accession>
<accession>Q5SXN4</accession>
<accession>Q5SXN8</accession>
<accession>Q6V704</accession>
<accession>Q9NVY5</accession>
<evidence type="ECO:0000250" key="1">
    <source>
        <dbReference type="UniProtKB" id="A2AIW0"/>
    </source>
</evidence>
<evidence type="ECO:0000255" key="2"/>
<evidence type="ECO:0000256" key="3">
    <source>
        <dbReference type="SAM" id="MobiDB-lite"/>
    </source>
</evidence>
<evidence type="ECO:0000269" key="4">
    <source>
    </source>
</evidence>
<evidence type="ECO:0000269" key="5">
    <source>
    </source>
</evidence>
<evidence type="ECO:0000269" key="6">
    <source>
    </source>
</evidence>
<evidence type="ECO:0000269" key="7">
    <source>
    </source>
</evidence>
<evidence type="ECO:0000269" key="8">
    <source>
    </source>
</evidence>
<evidence type="ECO:0000269" key="9">
    <source>
    </source>
</evidence>
<evidence type="ECO:0000269" key="10">
    <source ref="1"/>
</evidence>
<evidence type="ECO:0000303" key="11">
    <source>
    </source>
</evidence>
<evidence type="ECO:0000303" key="12">
    <source>
    </source>
</evidence>
<evidence type="ECO:0000303" key="13">
    <source>
    </source>
</evidence>
<evidence type="ECO:0000303" key="14">
    <source ref="1"/>
</evidence>
<evidence type="ECO:0000303" key="15">
    <source ref="2"/>
</evidence>
<evidence type="ECO:0000305" key="16"/>
<evidence type="ECO:0000312" key="17">
    <source>
        <dbReference type="HGNC" id="HGNC:10667"/>
    </source>
</evidence>
<evidence type="ECO:0007744" key="18">
    <source>
    </source>
</evidence>
<evidence type="ECO:0007744" key="19">
    <source>
    </source>
</evidence>
<evidence type="ECO:0007744" key="20">
    <source>
    </source>
</evidence>
<evidence type="ECO:0007744" key="21">
    <source>
    </source>
</evidence>
<gene>
    <name evidence="17" type="primary">ENTR1</name>
    <name type="synonym">SDCCAG3</name>
</gene>
<protein>
    <recommendedName>
        <fullName evidence="16">Endosome-associated-trafficking regulator 1</fullName>
    </recommendedName>
    <alternativeName>
        <fullName evidence="13">Antigen NY-CO-3</fullName>
    </alternativeName>
    <alternativeName>
        <fullName evidence="12">Serologically defined colon cancer antigen 3</fullName>
    </alternativeName>
</protein>
<organism>
    <name type="scientific">Homo sapiens</name>
    <name type="common">Human</name>
    <dbReference type="NCBI Taxonomy" id="9606"/>
    <lineage>
        <taxon>Eukaryota</taxon>
        <taxon>Metazoa</taxon>
        <taxon>Chordata</taxon>
        <taxon>Craniata</taxon>
        <taxon>Vertebrata</taxon>
        <taxon>Euteleostomi</taxon>
        <taxon>Mammalia</taxon>
        <taxon>Eutheria</taxon>
        <taxon>Euarchontoglires</taxon>
        <taxon>Primates</taxon>
        <taxon>Haplorrhini</taxon>
        <taxon>Catarrhini</taxon>
        <taxon>Hominidae</taxon>
        <taxon>Homo</taxon>
    </lineage>
</organism>
<dbReference type="EMBL" id="AY349357">
    <property type="protein sequence ID" value="AAQ56721.1"/>
    <property type="molecule type" value="mRNA"/>
</dbReference>
<dbReference type="EMBL" id="CR597452">
    <property type="status" value="NOT_ANNOTATED_CDS"/>
    <property type="molecule type" value="mRNA"/>
</dbReference>
<dbReference type="EMBL" id="AL592301">
    <property type="status" value="NOT_ANNOTATED_CDS"/>
    <property type="molecule type" value="Genomic_DNA"/>
</dbReference>
<dbReference type="EMBL" id="CH471090">
    <property type="protein sequence ID" value="EAW88230.1"/>
    <property type="molecule type" value="Genomic_DNA"/>
</dbReference>
<dbReference type="EMBL" id="CH471090">
    <property type="protein sequence ID" value="EAW88231.1"/>
    <property type="molecule type" value="Genomic_DNA"/>
</dbReference>
<dbReference type="EMBL" id="BC014515">
    <property type="protein sequence ID" value="AAH14515.2"/>
    <property type="molecule type" value="mRNA"/>
</dbReference>
<dbReference type="EMBL" id="AK001296">
    <property type="protein sequence ID" value="BAA91607.1"/>
    <property type="status" value="ALT_INIT"/>
    <property type="molecule type" value="mRNA"/>
</dbReference>
<dbReference type="EMBL" id="AF039688">
    <property type="protein sequence ID" value="AAC18037.1"/>
    <property type="molecule type" value="mRNA"/>
</dbReference>
<dbReference type="CCDS" id="CCDS43903.1">
    <molecule id="Q96C92-4"/>
</dbReference>
<dbReference type="CCDS" id="CCDS43904.1">
    <molecule id="Q96C92-1"/>
</dbReference>
<dbReference type="CCDS" id="CCDS6999.2">
    <molecule id="Q96C92-2"/>
</dbReference>
<dbReference type="RefSeq" id="NP_001034796.1">
    <molecule id="Q96C92-1"/>
    <property type="nucleotide sequence ID" value="NM_001039707.2"/>
</dbReference>
<dbReference type="RefSeq" id="NP_001034797.1">
    <molecule id="Q96C92-4"/>
    <property type="nucleotide sequence ID" value="NM_001039708.2"/>
</dbReference>
<dbReference type="RefSeq" id="NP_006634.3">
    <molecule id="Q96C92-2"/>
    <property type="nucleotide sequence ID" value="NM_006643.3"/>
</dbReference>
<dbReference type="SMR" id="Q96C92"/>
<dbReference type="BioGRID" id="116021">
    <property type="interactions" value="204"/>
</dbReference>
<dbReference type="CORUM" id="Q96C92"/>
<dbReference type="FunCoup" id="Q96C92">
    <property type="interactions" value="1734"/>
</dbReference>
<dbReference type="IntAct" id="Q96C92">
    <property type="interactions" value="76"/>
</dbReference>
<dbReference type="MINT" id="Q96C92"/>
<dbReference type="STRING" id="9606.ENSP00000349929"/>
<dbReference type="GlyGen" id="Q96C92">
    <property type="glycosylation" value="1 site, 1 O-linked glycan (1 site)"/>
</dbReference>
<dbReference type="iPTMnet" id="Q96C92"/>
<dbReference type="PhosphoSitePlus" id="Q96C92"/>
<dbReference type="BioMuta" id="SDCCAG3"/>
<dbReference type="DMDM" id="172045853"/>
<dbReference type="jPOST" id="Q96C92"/>
<dbReference type="MassIVE" id="Q96C92"/>
<dbReference type="PaxDb" id="9606-ENSP00000349929"/>
<dbReference type="PeptideAtlas" id="Q96C92"/>
<dbReference type="ProteomicsDB" id="76166">
    <molecule id="Q96C92-1"/>
</dbReference>
<dbReference type="ProteomicsDB" id="76167">
    <molecule id="Q96C92-2"/>
</dbReference>
<dbReference type="ProteomicsDB" id="76168">
    <molecule id="Q96C92-3"/>
</dbReference>
<dbReference type="ProteomicsDB" id="76169">
    <molecule id="Q96C92-4"/>
</dbReference>
<dbReference type="Pumba" id="Q96C92"/>
<dbReference type="Antibodypedia" id="32151">
    <property type="antibodies" value="137 antibodies from 22 providers"/>
</dbReference>
<dbReference type="DNASU" id="10807"/>
<dbReference type="Ensembl" id="ENST00000298537.11">
    <molecule id="Q96C92-2"/>
    <property type="protein sequence ID" value="ENSP00000298537.7"/>
    <property type="gene ID" value="ENSG00000165689.17"/>
</dbReference>
<dbReference type="Ensembl" id="ENST00000357365.8">
    <molecule id="Q96C92-1"/>
    <property type="protein sequence ID" value="ENSP00000349929.3"/>
    <property type="gene ID" value="ENSG00000165689.17"/>
</dbReference>
<dbReference type="Ensembl" id="ENST00000371725.7">
    <molecule id="Q96C92-4"/>
    <property type="protein sequence ID" value="ENSP00000360790.3"/>
    <property type="gene ID" value="ENSG00000165689.17"/>
</dbReference>
<dbReference type="GeneID" id="10807"/>
<dbReference type="KEGG" id="hsa:10807"/>
<dbReference type="MANE-Select" id="ENST00000357365.8">
    <property type="protein sequence ID" value="ENSP00000349929.3"/>
    <property type="RefSeq nucleotide sequence ID" value="NM_001039707.2"/>
    <property type="RefSeq protein sequence ID" value="NP_001034796.1"/>
</dbReference>
<dbReference type="UCSC" id="uc004chi.4">
    <molecule id="Q96C92-1"/>
    <property type="organism name" value="human"/>
</dbReference>
<dbReference type="AGR" id="HGNC:10667"/>
<dbReference type="CTD" id="10807"/>
<dbReference type="DisGeNET" id="10807"/>
<dbReference type="GeneCards" id="ENTR1"/>
<dbReference type="HGNC" id="HGNC:10667">
    <property type="gene designation" value="ENTR1"/>
</dbReference>
<dbReference type="HPA" id="ENSG00000165689">
    <property type="expression patterns" value="Low tissue specificity"/>
</dbReference>
<dbReference type="MIM" id="618289">
    <property type="type" value="gene"/>
</dbReference>
<dbReference type="neXtProt" id="NX_Q96C92"/>
<dbReference type="OpenTargets" id="ENSG00000165689"/>
<dbReference type="PharmGKB" id="PA35597"/>
<dbReference type="VEuPathDB" id="HostDB:ENSG00000165689"/>
<dbReference type="eggNOG" id="ENOG502QUJK">
    <property type="taxonomic scope" value="Eukaryota"/>
</dbReference>
<dbReference type="GeneTree" id="ENSGT00390000000560"/>
<dbReference type="HOGENOM" id="CLU_051353_0_0_1"/>
<dbReference type="InParanoid" id="Q96C92"/>
<dbReference type="OMA" id="WSGSYHP"/>
<dbReference type="OrthoDB" id="6499155at2759"/>
<dbReference type="PAN-GO" id="Q96C92">
    <property type="GO annotations" value="8 GO annotations based on evolutionary models"/>
</dbReference>
<dbReference type="PhylomeDB" id="Q96C92"/>
<dbReference type="TreeFam" id="TF335840"/>
<dbReference type="PathwayCommons" id="Q96C92"/>
<dbReference type="SignaLink" id="Q96C92"/>
<dbReference type="SIGNOR" id="Q96C92"/>
<dbReference type="BioGRID-ORCS" id="10807">
    <property type="hits" value="26 hits in 1150 CRISPR screens"/>
</dbReference>
<dbReference type="ChiTaRS" id="SDCCAG3">
    <property type="organism name" value="human"/>
</dbReference>
<dbReference type="GenomeRNAi" id="10807"/>
<dbReference type="Pharos" id="Q96C92">
    <property type="development level" value="Tbio"/>
</dbReference>
<dbReference type="PRO" id="PR:Q96C92"/>
<dbReference type="Proteomes" id="UP000005640">
    <property type="component" value="Chromosome 9"/>
</dbReference>
<dbReference type="RNAct" id="Q96C92">
    <property type="molecule type" value="protein"/>
</dbReference>
<dbReference type="Bgee" id="ENSG00000165689">
    <property type="expression patterns" value="Expressed in left testis and 190 other cell types or tissues"/>
</dbReference>
<dbReference type="ExpressionAtlas" id="Q96C92">
    <property type="expression patterns" value="baseline and differential"/>
</dbReference>
<dbReference type="GO" id="GO:0005813">
    <property type="term" value="C:centrosome"/>
    <property type="evidence" value="ECO:0000314"/>
    <property type="project" value="UniProtKB"/>
</dbReference>
<dbReference type="GO" id="GO:0036064">
    <property type="term" value="C:ciliary basal body"/>
    <property type="evidence" value="ECO:0000314"/>
    <property type="project" value="UniProtKB"/>
</dbReference>
<dbReference type="GO" id="GO:0005769">
    <property type="term" value="C:early endosome"/>
    <property type="evidence" value="ECO:0000314"/>
    <property type="project" value="UniProtKB"/>
</dbReference>
<dbReference type="GO" id="GO:0005768">
    <property type="term" value="C:endosome"/>
    <property type="evidence" value="ECO:0000314"/>
    <property type="project" value="UniProtKB"/>
</dbReference>
<dbReference type="GO" id="GO:0030496">
    <property type="term" value="C:midbody"/>
    <property type="evidence" value="ECO:0000314"/>
    <property type="project" value="UniProtKB"/>
</dbReference>
<dbReference type="GO" id="GO:0055037">
    <property type="term" value="C:recycling endosome"/>
    <property type="evidence" value="ECO:0000314"/>
    <property type="project" value="UniProtKB"/>
</dbReference>
<dbReference type="GO" id="GO:0051301">
    <property type="term" value="P:cell division"/>
    <property type="evidence" value="ECO:0007669"/>
    <property type="project" value="UniProtKB-KW"/>
</dbReference>
<dbReference type="GO" id="GO:0030030">
    <property type="term" value="P:cell projection organization"/>
    <property type="evidence" value="ECO:0007669"/>
    <property type="project" value="UniProtKB-KW"/>
</dbReference>
<dbReference type="GO" id="GO:0032456">
    <property type="term" value="P:endocytic recycling"/>
    <property type="evidence" value="ECO:0000315"/>
    <property type="project" value="UniProtKB"/>
</dbReference>
<dbReference type="GO" id="GO:0045724">
    <property type="term" value="P:positive regulation of cilium assembly"/>
    <property type="evidence" value="ECO:0000315"/>
    <property type="project" value="UniProtKB"/>
</dbReference>
<dbReference type="GO" id="GO:1903566">
    <property type="term" value="P:positive regulation of protein localization to cilium"/>
    <property type="evidence" value="ECO:0000315"/>
    <property type="project" value="UniProtKB"/>
</dbReference>
<dbReference type="GO" id="GO:0015031">
    <property type="term" value="P:protein transport"/>
    <property type="evidence" value="ECO:0007669"/>
    <property type="project" value="UniProtKB-KW"/>
</dbReference>
<dbReference type="GO" id="GO:0032465">
    <property type="term" value="P:regulation of cytokinesis"/>
    <property type="evidence" value="ECO:0000314"/>
    <property type="project" value="UniProtKB"/>
</dbReference>
<dbReference type="InterPro" id="IPR026757">
    <property type="entry name" value="ENTR1"/>
</dbReference>
<dbReference type="PANTHER" id="PTHR31259">
    <property type="entry name" value="ENDOSOME-ASSOCIATED TRAFFICKING REGULATOR 1"/>
    <property type="match status" value="1"/>
</dbReference>
<dbReference type="PANTHER" id="PTHR31259:SF6">
    <property type="entry name" value="ENDOSOME-ASSOCIATED-TRAFFICKING REGULATOR 1"/>
    <property type="match status" value="1"/>
</dbReference>
<keyword id="KW-0025">Alternative splicing</keyword>
<keyword id="KW-0131">Cell cycle</keyword>
<keyword id="KW-0132">Cell division</keyword>
<keyword id="KW-0966">Cell projection</keyword>
<keyword id="KW-0970">Cilium biogenesis/degradation</keyword>
<keyword id="KW-0175">Coiled coil</keyword>
<keyword id="KW-0963">Cytoplasm</keyword>
<keyword id="KW-0206">Cytoskeleton</keyword>
<keyword id="KW-0967">Endosome</keyword>
<keyword id="KW-0597">Phosphoprotein</keyword>
<keyword id="KW-0653">Protein transport</keyword>
<keyword id="KW-1267">Proteomics identification</keyword>
<keyword id="KW-1185">Reference proteome</keyword>
<keyword id="KW-0813">Transport</keyword>
<comment type="function">
    <text evidence="1 6 7 8">Endosome-associated protein that plays a role in membrane receptor sorting, cytokinesis and ciliogenesis (PubMed:23108400, PubMed:25278552, PubMed:27767179). Involved in the endosome-to-plasma membrane trafficking and recycling of SNX27-retromer-dependent cargo proteins, such as GLUT1 (PubMed:25278552). Involved in the regulation of cytokinesis; the function may involve PTPN13 and GIT1 (PubMed:23108400). Plays a role in the formation of cilia (PubMed:27767179). Involved in cargo protein localization, such as PKD2, at primary cilia (PubMed:27767179). Involved in the presentation of the tumor necrosis factor (TNF) receptor TNFRSF1A on the cell surface, and hence in the modulation of the TNF-induced apoptosis (By similarity).</text>
</comment>
<comment type="subunit">
    <text evidence="6 7 8 9">Found in a complex with ENTR1, PTPN13 and GIT1 (PubMed:23108400). Interacts with PTPN13 (via the FERM domain) (PubMed:23108400). Interacts (via N-terminus) with GIT1 (via N- and C-terminus); this interaction is direct (PubMed:23108400). Interacts with NOD2 (PubMed:27812135). Interacts (via N-terminus) with IFT88 (PubMed:27767179). Interacts with VPS35 (PubMed:25278552).</text>
</comment>
<comment type="interaction">
    <interactant intactId="EBI-717093">
        <id>Q96C92</id>
    </interactant>
    <interactant intactId="EBI-7445625">
        <id>Q9HC29</id>
        <label>NOD2</label>
    </interactant>
    <organismsDiffer>false</organismsDiffer>
    <experiments>5</experiments>
</comment>
<comment type="interaction">
    <interactant intactId="EBI-10178036">
        <id>Q96C92-2</id>
    </interactant>
    <interactant intactId="EBI-541426">
        <id>Q9BXS5</id>
        <label>AP1M1</label>
    </interactant>
    <organismsDiffer>false</organismsDiffer>
    <experiments>3</experiments>
</comment>
<comment type="interaction">
    <interactant intactId="EBI-10178036">
        <id>Q96C92-2</id>
    </interactant>
    <interactant intactId="EBI-16429430">
        <id>A0A0S2Z4M1</id>
        <label>AXIN1</label>
    </interactant>
    <organismsDiffer>false</organismsDiffer>
    <experiments>3</experiments>
</comment>
<comment type="interaction">
    <interactant intactId="EBI-10178036">
        <id>Q96C92-2</id>
    </interactant>
    <interactant intactId="EBI-351257">
        <id>P26196</id>
        <label>DDX6</label>
    </interactant>
    <organismsDiffer>false</organismsDiffer>
    <experiments>3</experiments>
</comment>
<comment type="interaction">
    <interactant intactId="EBI-10178036">
        <id>Q96C92-2</id>
    </interactant>
    <interactant intactId="EBI-727004">
        <id>O00560</id>
        <label>SDCBP</label>
    </interactant>
    <organismsDiffer>false</organismsDiffer>
    <experiments>3</experiments>
</comment>
<comment type="interaction">
    <interactant intactId="EBI-10178036">
        <id>Q96C92-2</id>
    </interactant>
    <interactant intactId="EBI-10178002">
        <id>P0C1Z6-2</id>
        <label>TFPT</label>
    </interactant>
    <organismsDiffer>false</organismsDiffer>
    <experiments>3</experiments>
</comment>
<comment type="subcellular location">
    <subcellularLocation>
        <location evidence="1">Cytoplasm</location>
    </subcellularLocation>
    <subcellularLocation>
        <location evidence="6">Early endosome</location>
    </subcellularLocation>
    <subcellularLocation>
        <location evidence="7">Endosome</location>
    </subcellularLocation>
    <subcellularLocation>
        <location evidence="6">Recycling endosome</location>
    </subcellularLocation>
    <subcellularLocation>
        <location evidence="6">Midbody</location>
    </subcellularLocation>
    <subcellularLocation>
        <location evidence="6 8">Cytoplasm</location>
        <location evidence="6 8">Cytoskeleton</location>
        <location evidence="6 8">Microtubule organizing center</location>
        <location evidence="6 8">Centrosome</location>
    </subcellularLocation>
    <subcellularLocation>
        <location evidence="8">Cytoplasm</location>
        <location evidence="8">Cytoskeleton</location>
        <location evidence="8">Cilium basal body</location>
    </subcellularLocation>
    <text evidence="6 7 8">Colocalizes in a WASHC2-dependent manner with the retromer CSC complex at endosomes (PubMed:25278552). During cytokinesis colocalized with PTPN13 at the midbody (PubMed:23108400). Colocalizes with IFT88 and gamma-tubulin at the basal body of primary cilia (PubMed:27767179). Colocalizes with IFT88 and pericentrin at the centrosome (PubMed:27767179).</text>
</comment>
<comment type="alternative products">
    <event type="alternative splicing"/>
    <isoform>
        <id>Q96C92-1</id>
        <name>1</name>
        <sequence type="displayed"/>
    </isoform>
    <isoform>
        <id>Q96C92-2</id>
        <name>2</name>
        <sequence type="described" ref="VSP_032177"/>
    </isoform>
    <isoform>
        <id>Q96C92-3</id>
        <name>3</name>
        <sequence type="described" ref="VSP_032176"/>
    </isoform>
    <isoform>
        <id>Q96C92-4</id>
        <name>4</name>
        <sequence type="described" ref="VSP_040477"/>
    </isoform>
</comment>
<comment type="tissue specificity">
    <text evidence="6">Expressed in the colon (at protein level).</text>
</comment>
<comment type="domain">
    <text evidence="8">Tne N-terminal domain is necessary and sufficient for basal body localization and ciliogenesis.</text>
</comment>
<comment type="PTM">
    <text evidence="6">Phosphorylated.</text>
</comment>
<comment type="similarity">
    <text evidence="16">Belongs to the ENTR1 family.</text>
</comment>
<comment type="sequence caution" evidence="16">
    <conflict type="erroneous initiation">
        <sequence resource="EMBL-CDS" id="BAA91607"/>
    </conflict>
    <text>Truncated N-terminus.</text>
</comment>